<sequence length="439" mass="47472">MTPILTVLICLGLSLDPRTHVQAGPLPKPTLWAEPGSVITQGSPVTLRCQGSLETQEYHLYREKKTALWITRIPQELVKKGQFPILSITWEHAGRYCCIYGSHTAGLSESSDPLELVVTGAYSKPTLSALPSPVVTSGGNVTIQCDSQVAFDGFILCKEGEDEHPQCLNSHSHARGSSRAIFSVGPVSPSRRWSYRCYGYDSRAPYVWSLPSDLLGLLVPGVSKKPSLSVQPGPVVAPGEKLTFQCGSDAGYDRFVLYKEWGRDFLQRPGRQPQAGLSQANFTLGPVSRSYGGQYTCSGAYNLSSEWSAPSDPLDILITGQIRARPFLSVRPGPTVASGENVTLLCQSQGGMHTFLLTKEGAADSPLRLKSKRQSHKYQAEFPMSPVTSAHAGTYRCYGSLSSNPYLLTHPSDPLELVVSGAAETLSPPQNKSDSKAGE</sequence>
<accession>Q8N6C8</accession>
<accession>J3KPM2</accession>
<accession>O15469</accession>
<accession>O15470</accession>
<accession>O75016</accession>
<accession>Q8N151</accession>
<accession>Q8N154</accession>
<accession>Q8NHJ1</accession>
<accession>Q8NHJ2</accession>
<accession>Q8NHJ3</accession>
<accession>Q8NHJ4</accession>
<reference key="1">
    <citation type="journal article" date="1997" name="J. Immunol.">
        <title>Molecular identification of a novel family of human Ig superfamily members that possess immunoreceptor tyrosine-based inhibition motifs and homology to the mouse gp49B1 inhibitory receptor.</title>
        <authorList>
            <person name="Arm J.P."/>
            <person name="Nwankwo C."/>
            <person name="Austen K.F."/>
        </authorList>
    </citation>
    <scope>NUCLEOTIDE SEQUENCE [MRNA] (ISOFORM 1)</scope>
    <scope>VARIANT SER-3</scope>
    <scope>TISSUE SPECIFICITY</scope>
    <source>
        <tissue>Lung</tissue>
        <tissue>Monocyte</tissue>
    </source>
</reference>
<reference key="2">
    <citation type="journal article" date="1997" name="J. Immunol.">
        <title>A family of human lymphoid and myeloid Ig-like receptors, some of which bind to MHC class I molecules.</title>
        <authorList>
            <person name="Borges L."/>
            <person name="Hsu M.-L."/>
            <person name="Fanger N."/>
            <person name="Kubin M."/>
            <person name="Cosman D."/>
        </authorList>
    </citation>
    <scope>NUCLEOTIDE SEQUENCE [MRNA] (ISOFORM 1)</scope>
    <scope>VARIANT SER-3</scope>
    <scope>TISSUE SPECIFICITY</scope>
</reference>
<reference key="3">
    <citation type="journal article" date="1997" name="Eur. J. Immunol.">
        <title>Cloning of novel immunoglobulin superfamily receptors expressed on human myeloid and lymphoid cells: structural evidence for new stimulatory and inhibitory pathways.</title>
        <authorList>
            <person name="Samaridis J."/>
            <person name="Colonna M."/>
        </authorList>
    </citation>
    <scope>NUCLEOTIDE SEQUENCE [MRNA] (ISOFORM 2)</scope>
</reference>
<reference key="4">
    <citation type="journal article" date="2004" name="Nature">
        <title>The DNA sequence and biology of human chromosome 19.</title>
        <authorList>
            <person name="Grimwood J."/>
            <person name="Gordon L.A."/>
            <person name="Olsen A.S."/>
            <person name="Terry A."/>
            <person name="Schmutz J."/>
            <person name="Lamerdin J.E."/>
            <person name="Hellsten U."/>
            <person name="Goodstein D."/>
            <person name="Couronne O."/>
            <person name="Tran-Gyamfi M."/>
            <person name="Aerts A."/>
            <person name="Altherr M."/>
            <person name="Ashworth L."/>
            <person name="Bajorek E."/>
            <person name="Black S."/>
            <person name="Branscomb E."/>
            <person name="Caenepeel S."/>
            <person name="Carrano A.V."/>
            <person name="Caoile C."/>
            <person name="Chan Y.M."/>
            <person name="Christensen M."/>
            <person name="Cleland C.A."/>
            <person name="Copeland A."/>
            <person name="Dalin E."/>
            <person name="Dehal P."/>
            <person name="Denys M."/>
            <person name="Detter J.C."/>
            <person name="Escobar J."/>
            <person name="Flowers D."/>
            <person name="Fotopulos D."/>
            <person name="Garcia C."/>
            <person name="Georgescu A.M."/>
            <person name="Glavina T."/>
            <person name="Gomez M."/>
            <person name="Gonzales E."/>
            <person name="Groza M."/>
            <person name="Hammon N."/>
            <person name="Hawkins T."/>
            <person name="Haydu L."/>
            <person name="Ho I."/>
            <person name="Huang W."/>
            <person name="Israni S."/>
            <person name="Jett J."/>
            <person name="Kadner K."/>
            <person name="Kimball H."/>
            <person name="Kobayashi A."/>
            <person name="Larionov V."/>
            <person name="Leem S.-H."/>
            <person name="Lopez F."/>
            <person name="Lou Y."/>
            <person name="Lowry S."/>
            <person name="Malfatti S."/>
            <person name="Martinez D."/>
            <person name="McCready P.M."/>
            <person name="Medina C."/>
            <person name="Morgan J."/>
            <person name="Nelson K."/>
            <person name="Nolan M."/>
            <person name="Ovcharenko I."/>
            <person name="Pitluck S."/>
            <person name="Pollard M."/>
            <person name="Popkie A.P."/>
            <person name="Predki P."/>
            <person name="Quan G."/>
            <person name="Ramirez L."/>
            <person name="Rash S."/>
            <person name="Retterer J."/>
            <person name="Rodriguez A."/>
            <person name="Rogers S."/>
            <person name="Salamov A."/>
            <person name="Salazar A."/>
            <person name="She X."/>
            <person name="Smith D."/>
            <person name="Slezak T."/>
            <person name="Solovyev V."/>
            <person name="Thayer N."/>
            <person name="Tice H."/>
            <person name="Tsai M."/>
            <person name="Ustaszewska A."/>
            <person name="Vo N."/>
            <person name="Wagner M."/>
            <person name="Wheeler J."/>
            <person name="Wu K."/>
            <person name="Xie G."/>
            <person name="Yang J."/>
            <person name="Dubchak I."/>
            <person name="Furey T.S."/>
            <person name="DeJong P."/>
            <person name="Dickson M."/>
            <person name="Gordon D."/>
            <person name="Eichler E.E."/>
            <person name="Pennacchio L.A."/>
            <person name="Richardson P."/>
            <person name="Stubbs L."/>
            <person name="Rokhsar D.S."/>
            <person name="Myers R.M."/>
            <person name="Rubin E.M."/>
            <person name="Lucas S.M."/>
        </authorList>
    </citation>
    <scope>NUCLEOTIDE SEQUENCE [LARGE SCALE GENOMIC DNA]</scope>
</reference>
<reference key="5">
    <citation type="journal article" date="2004" name="Genome Res.">
        <title>The status, quality, and expansion of the NIH full-length cDNA project: the Mammalian Gene Collection (MGC).</title>
        <authorList>
            <consortium name="The MGC Project Team"/>
        </authorList>
    </citation>
    <scope>NUCLEOTIDE SEQUENCE [LARGE SCALE MRNA]</scope>
    <scope>VARIANT SER-3</scope>
    <source>
        <tissue>Peripheral blood leukocyte</tissue>
    </source>
</reference>
<reference key="6">
    <citation type="journal article" date="2003" name="Immunogenetics">
        <title>DNA sequence variation and molecular genotyping of natural killer leukocyte immunoglobulin-like receptor, LILRA3.</title>
        <authorList>
            <person name="Norman P.J."/>
            <person name="Carey B.S."/>
            <person name="Stephens H.A."/>
            <person name="Vaughan R.W."/>
        </authorList>
    </citation>
    <scope>NUCLEOTIDE SEQUENCE [GENOMIC DNA] OF 1-420</scope>
    <scope>VARIANTS ARG-107 AND HIS-301</scope>
</reference>
<reference key="7">
    <citation type="journal article" date="2004" name="Protein Sci.">
        <title>Signal peptide prediction based on analysis of experimentally verified cleavage sites.</title>
        <authorList>
            <person name="Zhang Z."/>
            <person name="Henzel W.J."/>
        </authorList>
    </citation>
    <scope>PROTEIN SEQUENCE OF 24-38</scope>
</reference>
<reference key="8">
    <citation type="journal article" date="2013" name="J. Biol. Chem.">
        <title>Glycosylation in a mammalian expression system is critical for the production of functionally active leukocyte immunoglobulin-like receptor A3 protein.</title>
        <authorList>
            <person name="Lee T.H."/>
            <person name="Mitchell A."/>
            <person name="Liu Lau S."/>
            <person name="An H."/>
            <person name="Rajeaskariah P."/>
            <person name="Wasinger V."/>
            <person name="Raftery M."/>
            <person name="Bryant K."/>
            <person name="Tedla N."/>
        </authorList>
    </citation>
    <scope>GLYCOSYLATION AT ASN-140; ASN-281; ASN-302; ASN-341 AND ASN-431</scope>
    <scope>FUNCTION</scope>
</reference>
<reference key="9">
    <citation type="journal article" date="2011" name="PLoS ONE">
        <title>LILRA3 binds both classical and non-classical HLA class I molecules but with reduced affinities compared to LILRB1/LILRB2: structural evidence.</title>
        <authorList>
            <person name="Ryu M."/>
            <person name="Chen Y."/>
            <person name="Qi J."/>
            <person name="Liu J."/>
            <person name="Fan Z."/>
            <person name="Nam G."/>
            <person name="Shi Y."/>
            <person name="Cheng H."/>
            <person name="Gao G.F."/>
        </authorList>
    </citation>
    <scope>X-RAY CRYSTALLOGRAPHY (2.5 ANGSTROMS) OF 24-120</scope>
    <scope>DISULFIDE BOND</scope>
    <scope>FUNCTION</scope>
</reference>
<name>LIRA3_HUMAN</name>
<dbReference type="EMBL" id="U91926">
    <property type="protein sequence ID" value="AAB68666.1"/>
    <property type="molecule type" value="mRNA"/>
</dbReference>
<dbReference type="EMBL" id="U91927">
    <property type="protein sequence ID" value="AAB68667.1"/>
    <property type="molecule type" value="mRNA"/>
</dbReference>
<dbReference type="EMBL" id="AF025527">
    <property type="protein sequence ID" value="AAB87661.1"/>
    <property type="molecule type" value="mRNA"/>
</dbReference>
<dbReference type="EMBL" id="AF014924">
    <property type="protein sequence ID" value="AAC51886.1"/>
    <property type="molecule type" value="mRNA"/>
</dbReference>
<dbReference type="EMBL" id="AC008984">
    <property type="status" value="NOT_ANNOTATED_CDS"/>
    <property type="molecule type" value="Genomic_DNA"/>
</dbReference>
<dbReference type="EMBL" id="AC010518">
    <property type="status" value="NOT_ANNOTATED_CDS"/>
    <property type="molecule type" value="Genomic_DNA"/>
</dbReference>
<dbReference type="EMBL" id="BC028208">
    <property type="protein sequence ID" value="AAH28208.1"/>
    <property type="molecule type" value="mRNA"/>
</dbReference>
<dbReference type="EMBL" id="AF482762">
    <property type="protein sequence ID" value="AAM18035.1"/>
    <property type="molecule type" value="Genomic_DNA"/>
</dbReference>
<dbReference type="EMBL" id="AF482763">
    <property type="protein sequence ID" value="AAM18036.1"/>
    <property type="molecule type" value="Genomic_DNA"/>
</dbReference>
<dbReference type="EMBL" id="AF482764">
    <property type="protein sequence ID" value="AAM18037.1"/>
    <property type="molecule type" value="Genomic_DNA"/>
</dbReference>
<dbReference type="EMBL" id="AF482765">
    <property type="protein sequence ID" value="AAM18038.1"/>
    <property type="molecule type" value="Genomic_DNA"/>
</dbReference>
<dbReference type="EMBL" id="AF482766">
    <property type="protein sequence ID" value="AAM18039.1"/>
    <property type="molecule type" value="Genomic_DNA"/>
</dbReference>
<dbReference type="EMBL" id="AF482767">
    <property type="protein sequence ID" value="AAM18040.1"/>
    <property type="molecule type" value="Genomic_DNA"/>
</dbReference>
<dbReference type="EMBL" id="AF482768">
    <property type="protein sequence ID" value="AAM18041.1"/>
    <property type="molecule type" value="Genomic_DNA"/>
</dbReference>
<dbReference type="EMBL" id="AF482769">
    <property type="protein sequence ID" value="AAM18042.1"/>
    <property type="molecule type" value="Genomic_DNA"/>
</dbReference>
<dbReference type="RefSeq" id="NP_001166125.1">
    <molecule id="Q8N6C8-2"/>
    <property type="nucleotide sequence ID" value="NM_001172654.2"/>
</dbReference>
<dbReference type="RefSeq" id="NP_006856.3">
    <molecule id="Q8N6C8-1"/>
    <property type="nucleotide sequence ID" value="NM_006865.4"/>
</dbReference>
<dbReference type="PDB" id="3Q2C">
    <property type="method" value="X-ray"/>
    <property type="resolution" value="2.50 A"/>
    <property type="chains" value="A=24-120"/>
</dbReference>
<dbReference type="PDBsum" id="3Q2C"/>
<dbReference type="SMR" id="Q8N6C8"/>
<dbReference type="BioGRID" id="116216">
    <property type="interactions" value="12"/>
</dbReference>
<dbReference type="FunCoup" id="Q8N6C8">
    <property type="interactions" value="137"/>
</dbReference>
<dbReference type="IntAct" id="Q8N6C8">
    <property type="interactions" value="8"/>
</dbReference>
<dbReference type="GlyCosmos" id="Q8N6C8">
    <property type="glycosylation" value="5 sites, No reported glycans"/>
</dbReference>
<dbReference type="GlyGen" id="Q8N6C8">
    <property type="glycosylation" value="6 sites"/>
</dbReference>
<dbReference type="iPTMnet" id="Q8N6C8"/>
<dbReference type="PhosphoSitePlus" id="Q8N6C8"/>
<dbReference type="BioMuta" id="LILRA3"/>
<dbReference type="DMDM" id="92090611"/>
<dbReference type="MassIVE" id="Q8N6C8"/>
<dbReference type="PeptideAtlas" id="Q8N6C8"/>
<dbReference type="ProteomicsDB" id="72158">
    <molecule id="Q8N6C8-1"/>
</dbReference>
<dbReference type="DNASU" id="11026"/>
<dbReference type="Ensembl" id="ENST00000612127.4">
    <molecule id="Q8N6C8-1"/>
    <property type="protein sequence ID" value="ENSP00000484119.1"/>
    <property type="gene ID" value="ENSG00000278046.4"/>
</dbReference>
<dbReference type="Ensembl" id="ENST00000615652.4">
    <molecule id="Q8N6C8-1"/>
    <property type="protein sequence ID" value="ENSP00000482971.1"/>
    <property type="gene ID" value="ENSG00000273884.4"/>
</dbReference>
<dbReference type="Ensembl" id="ENST00000617541.4">
    <molecule id="Q8N6C8-2"/>
    <property type="protein sequence ID" value="ENSP00000477708.1"/>
    <property type="gene ID" value="ENSG00000275841.5"/>
</dbReference>
<dbReference type="Ensembl" id="ENST00000619638.5">
    <molecule id="Q8N6C8-1"/>
    <property type="protein sequence ID" value="ENSP00000481818.1"/>
    <property type="gene ID" value="ENSG00000275841.5"/>
</dbReference>
<dbReference type="Ensembl" id="ENST00000620589.4">
    <molecule id="Q8N6C8-1"/>
    <property type="protein sequence ID" value="ENSP00000480386.1"/>
    <property type="gene ID" value="ENSG00000276175.4"/>
</dbReference>
<dbReference type="GeneID" id="11026"/>
<dbReference type="KEGG" id="hsa:11026"/>
<dbReference type="MANE-Select" id="ENST00000620589.4">
    <property type="protein sequence ID" value="ENSP00000480386.1"/>
    <property type="RefSeq nucleotide sequence ID" value="NM_006865.5"/>
    <property type="RefSeq protein sequence ID" value="NP_006856.3"/>
</dbReference>
<dbReference type="UCSC" id="uc032ini.2">
    <molecule id="Q8N6C8-1"/>
    <property type="organism name" value="human"/>
</dbReference>
<dbReference type="AGR" id="HGNC:6604"/>
<dbReference type="CTD" id="11026"/>
<dbReference type="DisGeNET" id="11026"/>
<dbReference type="GeneCards" id="LILRA3"/>
<dbReference type="HGNC" id="HGNC:6604">
    <property type="gene designation" value="LILRA3"/>
</dbReference>
<dbReference type="MIM" id="604818">
    <property type="type" value="gene"/>
</dbReference>
<dbReference type="neXtProt" id="NX_Q8N6C8"/>
<dbReference type="PharmGKB" id="PA30378"/>
<dbReference type="InParanoid" id="Q8N6C8"/>
<dbReference type="PAN-GO" id="Q8N6C8">
    <property type="GO annotations" value="3 GO annotations based on evolutionary models"/>
</dbReference>
<dbReference type="PhylomeDB" id="Q8N6C8"/>
<dbReference type="TreeFam" id="TF336644"/>
<dbReference type="PathwayCommons" id="Q8N6C8"/>
<dbReference type="Reactome" id="R-HSA-198933">
    <property type="pathway name" value="Immunoregulatory interactions between a Lymphoid and a non-Lymphoid cell"/>
</dbReference>
<dbReference type="Reactome" id="R-HSA-6798695">
    <property type="pathway name" value="Neutrophil degranulation"/>
</dbReference>
<dbReference type="SignaLink" id="Q8N6C8"/>
<dbReference type="BioGRID-ORCS" id="11026">
    <property type="hits" value="7 hits in 642 CRISPR screens"/>
</dbReference>
<dbReference type="EvolutionaryTrace" id="Q8N6C8"/>
<dbReference type="GeneWiki" id="LILRA3"/>
<dbReference type="GenomeRNAi" id="11026"/>
<dbReference type="Pharos" id="Q8N6C8">
    <property type="development level" value="Tdark"/>
</dbReference>
<dbReference type="PRO" id="PR:Q8N6C8"/>
<dbReference type="Proteomes" id="UP000005640">
    <property type="component" value="Unplaced"/>
</dbReference>
<dbReference type="RNAct" id="Q8N6C8">
    <property type="molecule type" value="protein"/>
</dbReference>
<dbReference type="GO" id="GO:0005576">
    <property type="term" value="C:extracellular region"/>
    <property type="evidence" value="ECO:0007669"/>
    <property type="project" value="UniProtKB-SubCell"/>
</dbReference>
<dbReference type="GO" id="GO:0101003">
    <property type="term" value="C:ficolin-1-rich granule membrane"/>
    <property type="evidence" value="ECO:0000304"/>
    <property type="project" value="Reactome"/>
</dbReference>
<dbReference type="GO" id="GO:0005886">
    <property type="term" value="C:plasma membrane"/>
    <property type="evidence" value="ECO:0000318"/>
    <property type="project" value="GO_Central"/>
</dbReference>
<dbReference type="GO" id="GO:0035579">
    <property type="term" value="C:specific granule membrane"/>
    <property type="evidence" value="ECO:0000304"/>
    <property type="project" value="Reactome"/>
</dbReference>
<dbReference type="GO" id="GO:0070821">
    <property type="term" value="C:tertiary granule membrane"/>
    <property type="evidence" value="ECO:0000304"/>
    <property type="project" value="Reactome"/>
</dbReference>
<dbReference type="GO" id="GO:0032396">
    <property type="term" value="F:inhibitory MHC class I receptor activity"/>
    <property type="evidence" value="ECO:0000318"/>
    <property type="project" value="GO_Central"/>
</dbReference>
<dbReference type="GO" id="GO:0002250">
    <property type="term" value="P:adaptive immune response"/>
    <property type="evidence" value="ECO:0007669"/>
    <property type="project" value="UniProtKB-KW"/>
</dbReference>
<dbReference type="GO" id="GO:0002764">
    <property type="term" value="P:immune response-regulating signaling pathway"/>
    <property type="evidence" value="ECO:0000318"/>
    <property type="project" value="GO_Central"/>
</dbReference>
<dbReference type="GO" id="GO:0140105">
    <property type="term" value="P:interleukin-10-mediated signaling pathway"/>
    <property type="evidence" value="ECO:0000318"/>
    <property type="project" value="GO_Central"/>
</dbReference>
<dbReference type="CDD" id="cd05751">
    <property type="entry name" value="IgC2_D1_LILR_KIR_like"/>
    <property type="match status" value="1"/>
</dbReference>
<dbReference type="FunFam" id="2.60.40.10:FF:000049">
    <property type="entry name" value="Leukocyte immunoglobulin-like receptor subfamily B member 1"/>
    <property type="match status" value="4"/>
</dbReference>
<dbReference type="Gene3D" id="2.60.40.10">
    <property type="entry name" value="Immunoglobulins"/>
    <property type="match status" value="4"/>
</dbReference>
<dbReference type="InterPro" id="IPR016332">
    <property type="entry name" value="A1B_glyco/leuk_Ig-like_rcpt"/>
</dbReference>
<dbReference type="InterPro" id="IPR007110">
    <property type="entry name" value="Ig-like_dom"/>
</dbReference>
<dbReference type="InterPro" id="IPR036179">
    <property type="entry name" value="Ig-like_dom_sf"/>
</dbReference>
<dbReference type="InterPro" id="IPR013783">
    <property type="entry name" value="Ig-like_fold"/>
</dbReference>
<dbReference type="InterPro" id="IPR050412">
    <property type="entry name" value="Ig-like_Receptors_ImmuneReg"/>
</dbReference>
<dbReference type="InterPro" id="IPR003599">
    <property type="entry name" value="Ig_sub"/>
</dbReference>
<dbReference type="InterPro" id="IPR003598">
    <property type="entry name" value="Ig_sub2"/>
</dbReference>
<dbReference type="PANTHER" id="PTHR11738:SF170">
    <property type="entry name" value="LEUKOCYTE IMMUNOGLOBULIN-LIKE RECEPTOR SUBFAMILY A MEMBER 3-RELATED"/>
    <property type="match status" value="1"/>
</dbReference>
<dbReference type="PANTHER" id="PTHR11738">
    <property type="entry name" value="MHC CLASS I NK CELL RECEPTOR"/>
    <property type="match status" value="1"/>
</dbReference>
<dbReference type="Pfam" id="PF13895">
    <property type="entry name" value="Ig_2"/>
    <property type="match status" value="2"/>
</dbReference>
<dbReference type="PIRSF" id="PIRSF001979">
    <property type="entry name" value="Alpha_1B_glycoprot_prd"/>
    <property type="match status" value="1"/>
</dbReference>
<dbReference type="SMART" id="SM00409">
    <property type="entry name" value="IG"/>
    <property type="match status" value="3"/>
</dbReference>
<dbReference type="SMART" id="SM00408">
    <property type="entry name" value="IGc2"/>
    <property type="match status" value="3"/>
</dbReference>
<dbReference type="SUPFAM" id="SSF48726">
    <property type="entry name" value="Immunoglobulin"/>
    <property type="match status" value="4"/>
</dbReference>
<dbReference type="PROSITE" id="PS50835">
    <property type="entry name" value="IG_LIKE"/>
    <property type="match status" value="3"/>
</dbReference>
<comment type="function">
    <text evidence="5 6">Acts as a soluble receptor for class I MHC antigens. Binds both classical and non-classical HLA class I molecules but with reduced affinities compared to LILRB1 or LILRB2. Binds with high affinity to the surface of monocytes, leading to abolish LPS-induced TNF-alpha production by monocytes.</text>
</comment>
<comment type="subcellular location">
    <subcellularLocation>
        <location evidence="10">Secreted</location>
    </subcellularLocation>
</comment>
<comment type="alternative products">
    <event type="alternative splicing"/>
    <isoform>
        <id>Q8N6C8-1</id>
        <name>1</name>
        <sequence type="displayed"/>
    </isoform>
    <isoform>
        <id>Q8N6C8-2</id>
        <name>2</name>
        <sequence type="described" ref="VSP_045887"/>
    </isoform>
    <isoform>
        <id>Q8N6C8-3</id>
        <name>3</name>
        <sequence type="described" ref="VSP_045886"/>
    </isoform>
</comment>
<comment type="tissue specificity">
    <text evidence="7 8">Detected in B-cells, and at lower levels in natural killer (NK) cells. Detected in peripheral blood monocytes and lung.</text>
</comment>
<comment type="PTM">
    <text evidence="6">N-glycosylation is required for ligand binding.</text>
</comment>
<feature type="signal peptide" evidence="3">
    <location>
        <begin position="1"/>
        <end position="23"/>
    </location>
</feature>
<feature type="chain" id="PRO_0000014818" description="Leukocyte immunoglobulin-like receptor subfamily A member 3">
    <location>
        <begin position="24"/>
        <end position="439"/>
    </location>
</feature>
<feature type="domain" description="Ig-like C2-type 1">
    <location>
        <begin position="27"/>
        <end position="108"/>
    </location>
</feature>
<feature type="domain" description="Ig-like C2-type 2">
    <location>
        <begin position="119"/>
        <end position="224"/>
    </location>
</feature>
<feature type="domain" description="Ig-like C2-type 3">
    <location>
        <begin position="226"/>
        <end position="315"/>
    </location>
</feature>
<feature type="domain" description="Ig-like C2-type 4">
    <location>
        <begin position="326"/>
        <end position="415"/>
    </location>
</feature>
<feature type="glycosylation site" description="N-linked (GlcNAc...) asparagine" evidence="6">
    <location>
        <position position="140"/>
    </location>
</feature>
<feature type="glycosylation site" description="N-linked (GlcNAc...) asparagine" evidence="6">
    <location>
        <position position="281"/>
    </location>
</feature>
<feature type="glycosylation site" description="N-linked (GlcNAc...) asparagine" evidence="6">
    <location>
        <position position="302"/>
    </location>
</feature>
<feature type="glycosylation site" description="N-linked (GlcNAc...) asparagine" evidence="6">
    <location>
        <position position="341"/>
    </location>
</feature>
<feature type="glycosylation site" description="N-linked (GlcNAc...) asparagine" evidence="6">
    <location>
        <position position="431"/>
    </location>
</feature>
<feature type="disulfide bond" evidence="5 11">
    <location>
        <begin position="49"/>
        <end position="98"/>
    </location>
</feature>
<feature type="disulfide bond" evidence="1">
    <location>
        <begin position="145"/>
        <end position="197"/>
    </location>
</feature>
<feature type="disulfide bond" evidence="1">
    <location>
        <begin position="157"/>
        <end position="167"/>
    </location>
</feature>
<feature type="disulfide bond" evidence="1">
    <location>
        <begin position="246"/>
        <end position="297"/>
    </location>
</feature>
<feature type="disulfide bond" evidence="1">
    <location>
        <begin position="346"/>
        <end position="397"/>
    </location>
</feature>
<feature type="splice variant" id="VSP_045886" description="In isoform 3." evidence="10">
    <original>M</original>
    <variation>MHRGLIHPQSSAVGGDAM</variation>
    <location>
        <position position="1"/>
    </location>
</feature>
<feature type="splice variant" id="VSP_045887" description="In isoform 2." evidence="9">
    <location>
        <begin position="158"/>
        <end position="221"/>
    </location>
</feature>
<feature type="sequence variant" id="VAR_016990" description="In dbSNP:rs11574606." evidence="4 7 8">
    <original>P</original>
    <variation>S</variation>
    <location>
        <position position="3"/>
    </location>
</feature>
<feature type="sequence variant" id="VAR_016991" description="In dbSNP:rs6509862." evidence="2">
    <original>L</original>
    <variation>R</variation>
    <location>
        <position position="107"/>
    </location>
</feature>
<feature type="sequence variant" id="VAR_016992" description="In dbSNP:rs4473306." evidence="2">
    <original>Y</original>
    <variation>H</variation>
    <location>
        <position position="301"/>
    </location>
</feature>
<feature type="sequence conflict" description="In Ref. 5; AAH28208." evidence="10" ref="5">
    <original>A</original>
    <variation>V</variation>
    <location>
        <position position="105"/>
    </location>
</feature>
<feature type="sequence conflict" description="In Ref. 1; AAB68667." evidence="10" ref="1">
    <original>S</original>
    <variation>P</variation>
    <location>
        <position position="223"/>
    </location>
</feature>
<feature type="sequence conflict" description="In Ref. 6; AAM18037." evidence="10" ref="6">
    <original>A</original>
    <variation>T</variation>
    <location>
        <position position="250"/>
    </location>
</feature>
<feature type="sequence conflict" description="In Ref. 1; AAB68667." evidence="10" ref="1">
    <original>S</original>
    <variation>L</variation>
    <location>
        <position position="371"/>
    </location>
</feature>
<feature type="strand" evidence="12">
    <location>
        <begin position="30"/>
        <end position="35"/>
    </location>
</feature>
<feature type="strand" evidence="12">
    <location>
        <begin position="37"/>
        <end position="40"/>
    </location>
</feature>
<feature type="strand" evidence="12">
    <location>
        <begin position="45"/>
        <end position="50"/>
    </location>
</feature>
<feature type="strand" evidence="12">
    <location>
        <begin position="52"/>
        <end position="56"/>
    </location>
</feature>
<feature type="strand" evidence="12">
    <location>
        <begin position="58"/>
        <end position="65"/>
    </location>
</feature>
<feature type="helix" evidence="12">
    <location>
        <begin position="68"/>
        <end position="72"/>
    </location>
</feature>
<feature type="helix" evidence="12">
    <location>
        <begin position="75"/>
        <end position="79"/>
    </location>
</feature>
<feature type="strand" evidence="12">
    <location>
        <begin position="82"/>
        <end position="87"/>
    </location>
</feature>
<feature type="helix" evidence="12">
    <location>
        <begin position="90"/>
        <end position="92"/>
    </location>
</feature>
<feature type="strand" evidence="12">
    <location>
        <begin position="94"/>
        <end position="102"/>
    </location>
</feature>
<feature type="turn" evidence="12">
    <location>
        <begin position="103"/>
        <end position="105"/>
    </location>
</feature>
<feature type="strand" evidence="12">
    <location>
        <begin position="106"/>
        <end position="108"/>
    </location>
</feature>
<feature type="strand" evidence="12">
    <location>
        <begin position="114"/>
        <end position="119"/>
    </location>
</feature>
<evidence type="ECO:0000255" key="1">
    <source>
        <dbReference type="PROSITE-ProRule" id="PRU00114"/>
    </source>
</evidence>
<evidence type="ECO:0000269" key="2">
    <source>
    </source>
</evidence>
<evidence type="ECO:0000269" key="3">
    <source>
    </source>
</evidence>
<evidence type="ECO:0000269" key="4">
    <source>
    </source>
</evidence>
<evidence type="ECO:0000269" key="5">
    <source>
    </source>
</evidence>
<evidence type="ECO:0000269" key="6">
    <source>
    </source>
</evidence>
<evidence type="ECO:0000269" key="7">
    <source>
    </source>
</evidence>
<evidence type="ECO:0000269" key="8">
    <source>
    </source>
</evidence>
<evidence type="ECO:0000303" key="9">
    <source>
    </source>
</evidence>
<evidence type="ECO:0000305" key="10"/>
<evidence type="ECO:0007744" key="11">
    <source>
        <dbReference type="PDB" id="3Q2C"/>
    </source>
</evidence>
<evidence type="ECO:0007829" key="12">
    <source>
        <dbReference type="PDB" id="3Q2C"/>
    </source>
</evidence>
<gene>
    <name type="primary">LILRA3</name>
    <name type="synonym">ILT6</name>
    <name type="synonym">LIR4</name>
</gene>
<organism>
    <name type="scientific">Homo sapiens</name>
    <name type="common">Human</name>
    <dbReference type="NCBI Taxonomy" id="9606"/>
    <lineage>
        <taxon>Eukaryota</taxon>
        <taxon>Metazoa</taxon>
        <taxon>Chordata</taxon>
        <taxon>Craniata</taxon>
        <taxon>Vertebrata</taxon>
        <taxon>Euteleostomi</taxon>
        <taxon>Mammalia</taxon>
        <taxon>Eutheria</taxon>
        <taxon>Euarchontoglires</taxon>
        <taxon>Primates</taxon>
        <taxon>Haplorrhini</taxon>
        <taxon>Catarrhini</taxon>
        <taxon>Hominidae</taxon>
        <taxon>Homo</taxon>
    </lineage>
</organism>
<protein>
    <recommendedName>
        <fullName>Leukocyte immunoglobulin-like receptor subfamily A member 3</fullName>
    </recommendedName>
    <alternativeName>
        <fullName>CD85 antigen-like family member E</fullName>
    </alternativeName>
    <alternativeName>
        <fullName>Immunoglobulin-like transcript 6</fullName>
        <shortName>ILT-6</shortName>
    </alternativeName>
    <alternativeName>
        <fullName>Leukocyte immunoglobulin-like receptor 4</fullName>
        <shortName>LIR-4</shortName>
    </alternativeName>
    <alternativeName>
        <fullName>Monocyte inhibitory receptor HM43/HM31</fullName>
    </alternativeName>
    <cdAntigenName>CD85e</cdAntigenName>
</protein>
<keyword id="KW-0002">3D-structure</keyword>
<keyword id="KW-1064">Adaptive immunity</keyword>
<keyword id="KW-0025">Alternative splicing</keyword>
<keyword id="KW-0903">Direct protein sequencing</keyword>
<keyword id="KW-1015">Disulfide bond</keyword>
<keyword id="KW-0325">Glycoprotein</keyword>
<keyword id="KW-0391">Immunity</keyword>
<keyword id="KW-0393">Immunoglobulin domain</keyword>
<keyword id="KW-1267">Proteomics identification</keyword>
<keyword id="KW-0675">Receptor</keyword>
<keyword id="KW-1185">Reference proteome</keyword>
<keyword id="KW-0677">Repeat</keyword>
<keyword id="KW-0964">Secreted</keyword>
<keyword id="KW-0732">Signal</keyword>
<proteinExistence type="evidence at protein level"/>